<gene>
    <name evidence="1" type="primary">pdxA</name>
    <name type="ordered locus">Gmet_3404</name>
</gene>
<proteinExistence type="inferred from homology"/>
<protein>
    <recommendedName>
        <fullName evidence="1">4-hydroxythreonine-4-phosphate dehydrogenase</fullName>
        <ecNumber evidence="1">1.1.1.262</ecNumber>
    </recommendedName>
    <alternativeName>
        <fullName evidence="1">4-(phosphohydroxy)-L-threonine dehydrogenase</fullName>
    </alternativeName>
</protein>
<sequence length="339" mass="36281">MPNTKPRIVITMGDPTGVGPEIIAATLAEPEVRQCCRFLVVGDSAAMARGITVAGAALRVERTDTLNWEESKEGVLPLWEISSLTEADMQYGCPTVASGDAMYRAICEAARLCLEGNADAMATAPISKEALNRAGHRYPGHTELLAELAGAERVVMMLAGFRLRVTLVTIHEALADVPRLVTFERVLETIRITHRDLHRYFRRNPRIAVLALNPHCGEGGMFGDEEARIIAPAVAAARQEGIDAIGPLSADTLFHFAVQGAYDAVVCMYHDQGLIPLKLLHFDDGVNVTLGLPIIRTSVDHGTAYDLAGTGRASAESMKAAILMAAEMARVKGSGGGTP</sequence>
<keyword id="KW-0170">Cobalt</keyword>
<keyword id="KW-0963">Cytoplasm</keyword>
<keyword id="KW-0460">Magnesium</keyword>
<keyword id="KW-0479">Metal-binding</keyword>
<keyword id="KW-0520">NAD</keyword>
<keyword id="KW-0521">NADP</keyword>
<keyword id="KW-0560">Oxidoreductase</keyword>
<keyword id="KW-0664">Pyridoxine biosynthesis</keyword>
<keyword id="KW-1185">Reference proteome</keyword>
<keyword id="KW-0862">Zinc</keyword>
<accession>Q39Q58</accession>
<feature type="chain" id="PRO_1000051501" description="4-hydroxythreonine-4-phosphate dehydrogenase">
    <location>
        <begin position="1"/>
        <end position="339"/>
    </location>
</feature>
<feature type="binding site" evidence="1">
    <location>
        <position position="141"/>
    </location>
    <ligand>
        <name>substrate</name>
    </ligand>
</feature>
<feature type="binding site" evidence="1">
    <location>
        <position position="142"/>
    </location>
    <ligand>
        <name>substrate</name>
    </ligand>
</feature>
<feature type="binding site" evidence="1">
    <location>
        <position position="171"/>
    </location>
    <ligand>
        <name>a divalent metal cation</name>
        <dbReference type="ChEBI" id="CHEBI:60240"/>
        <note>ligand shared between dimeric partners</note>
    </ligand>
</feature>
<feature type="binding site" evidence="1">
    <location>
        <position position="215"/>
    </location>
    <ligand>
        <name>a divalent metal cation</name>
        <dbReference type="ChEBI" id="CHEBI:60240"/>
        <note>ligand shared between dimeric partners</note>
    </ligand>
</feature>
<feature type="binding site" evidence="1">
    <location>
        <position position="270"/>
    </location>
    <ligand>
        <name>a divalent metal cation</name>
        <dbReference type="ChEBI" id="CHEBI:60240"/>
        <note>ligand shared between dimeric partners</note>
    </ligand>
</feature>
<feature type="binding site" evidence="1">
    <location>
        <position position="278"/>
    </location>
    <ligand>
        <name>substrate</name>
    </ligand>
</feature>
<feature type="binding site" evidence="1">
    <location>
        <position position="287"/>
    </location>
    <ligand>
        <name>substrate</name>
    </ligand>
</feature>
<feature type="binding site" evidence="1">
    <location>
        <position position="296"/>
    </location>
    <ligand>
        <name>substrate</name>
    </ligand>
</feature>
<evidence type="ECO:0000255" key="1">
    <source>
        <dbReference type="HAMAP-Rule" id="MF_00536"/>
    </source>
</evidence>
<reference key="1">
    <citation type="journal article" date="2009" name="BMC Microbiol.">
        <title>The genome sequence of Geobacter metallireducens: features of metabolism, physiology and regulation common and dissimilar to Geobacter sulfurreducens.</title>
        <authorList>
            <person name="Aklujkar M."/>
            <person name="Krushkal J."/>
            <person name="DiBartolo G."/>
            <person name="Lapidus A."/>
            <person name="Land M.L."/>
            <person name="Lovley D.R."/>
        </authorList>
    </citation>
    <scope>NUCLEOTIDE SEQUENCE [LARGE SCALE GENOMIC DNA]</scope>
    <source>
        <strain>ATCC 53774 / DSM 7210 / GS-15</strain>
    </source>
</reference>
<dbReference type="EC" id="1.1.1.262" evidence="1"/>
<dbReference type="EMBL" id="CP000148">
    <property type="protein sequence ID" value="ABB33616.1"/>
    <property type="molecule type" value="Genomic_DNA"/>
</dbReference>
<dbReference type="RefSeq" id="WP_011366188.1">
    <property type="nucleotide sequence ID" value="NC_007517.1"/>
</dbReference>
<dbReference type="SMR" id="Q39Q58"/>
<dbReference type="STRING" id="269799.Gmet_3404"/>
<dbReference type="KEGG" id="gme:Gmet_3404"/>
<dbReference type="eggNOG" id="COG1995">
    <property type="taxonomic scope" value="Bacteria"/>
</dbReference>
<dbReference type="HOGENOM" id="CLU_040168_0_0_7"/>
<dbReference type="UniPathway" id="UPA00244">
    <property type="reaction ID" value="UER00312"/>
</dbReference>
<dbReference type="Proteomes" id="UP000007073">
    <property type="component" value="Chromosome"/>
</dbReference>
<dbReference type="GO" id="GO:0005737">
    <property type="term" value="C:cytoplasm"/>
    <property type="evidence" value="ECO:0007669"/>
    <property type="project" value="UniProtKB-SubCell"/>
</dbReference>
<dbReference type="GO" id="GO:0050570">
    <property type="term" value="F:4-hydroxythreonine-4-phosphate dehydrogenase activity"/>
    <property type="evidence" value="ECO:0007669"/>
    <property type="project" value="UniProtKB-UniRule"/>
</dbReference>
<dbReference type="GO" id="GO:0046872">
    <property type="term" value="F:metal ion binding"/>
    <property type="evidence" value="ECO:0007669"/>
    <property type="project" value="UniProtKB-UniRule"/>
</dbReference>
<dbReference type="GO" id="GO:0051287">
    <property type="term" value="F:NAD binding"/>
    <property type="evidence" value="ECO:0007669"/>
    <property type="project" value="InterPro"/>
</dbReference>
<dbReference type="GO" id="GO:0042823">
    <property type="term" value="P:pyridoxal phosphate biosynthetic process"/>
    <property type="evidence" value="ECO:0007669"/>
    <property type="project" value="UniProtKB-UniRule"/>
</dbReference>
<dbReference type="GO" id="GO:0008615">
    <property type="term" value="P:pyridoxine biosynthetic process"/>
    <property type="evidence" value="ECO:0007669"/>
    <property type="project" value="UniProtKB-UniRule"/>
</dbReference>
<dbReference type="Gene3D" id="3.40.718.10">
    <property type="entry name" value="Isopropylmalate Dehydrogenase"/>
    <property type="match status" value="1"/>
</dbReference>
<dbReference type="HAMAP" id="MF_00536">
    <property type="entry name" value="PdxA"/>
    <property type="match status" value="1"/>
</dbReference>
<dbReference type="InterPro" id="IPR037510">
    <property type="entry name" value="PdxA"/>
</dbReference>
<dbReference type="InterPro" id="IPR005255">
    <property type="entry name" value="PdxA_fam"/>
</dbReference>
<dbReference type="NCBIfam" id="TIGR00557">
    <property type="entry name" value="pdxA"/>
    <property type="match status" value="1"/>
</dbReference>
<dbReference type="PANTHER" id="PTHR30004">
    <property type="entry name" value="4-HYDROXYTHREONINE-4-PHOSPHATE DEHYDROGENASE"/>
    <property type="match status" value="1"/>
</dbReference>
<dbReference type="PANTHER" id="PTHR30004:SF6">
    <property type="entry name" value="D-THREONATE 4-PHOSPHATE DEHYDROGENASE"/>
    <property type="match status" value="1"/>
</dbReference>
<dbReference type="Pfam" id="PF04166">
    <property type="entry name" value="PdxA"/>
    <property type="match status" value="1"/>
</dbReference>
<dbReference type="SUPFAM" id="SSF53659">
    <property type="entry name" value="Isocitrate/Isopropylmalate dehydrogenase-like"/>
    <property type="match status" value="1"/>
</dbReference>
<name>PDXA_GEOMG</name>
<organism>
    <name type="scientific">Geobacter metallireducens (strain ATCC 53774 / DSM 7210 / GS-15)</name>
    <dbReference type="NCBI Taxonomy" id="269799"/>
    <lineage>
        <taxon>Bacteria</taxon>
        <taxon>Pseudomonadati</taxon>
        <taxon>Thermodesulfobacteriota</taxon>
        <taxon>Desulfuromonadia</taxon>
        <taxon>Geobacterales</taxon>
        <taxon>Geobacteraceae</taxon>
        <taxon>Geobacter</taxon>
    </lineage>
</organism>
<comment type="function">
    <text evidence="1">Catalyzes the NAD(P)-dependent oxidation of 4-(phosphooxy)-L-threonine (HTP) into 2-amino-3-oxo-4-(phosphooxy)butyric acid which spontaneously decarboxylates to form 3-amino-2-oxopropyl phosphate (AHAP).</text>
</comment>
<comment type="catalytic activity">
    <reaction evidence="1">
        <text>4-(phosphooxy)-L-threonine + NAD(+) = 3-amino-2-oxopropyl phosphate + CO2 + NADH</text>
        <dbReference type="Rhea" id="RHEA:32275"/>
        <dbReference type="ChEBI" id="CHEBI:16526"/>
        <dbReference type="ChEBI" id="CHEBI:57279"/>
        <dbReference type="ChEBI" id="CHEBI:57540"/>
        <dbReference type="ChEBI" id="CHEBI:57945"/>
        <dbReference type="ChEBI" id="CHEBI:58452"/>
        <dbReference type="EC" id="1.1.1.262"/>
    </reaction>
</comment>
<comment type="cofactor">
    <cofactor evidence="1">
        <name>Zn(2+)</name>
        <dbReference type="ChEBI" id="CHEBI:29105"/>
    </cofactor>
    <cofactor evidence="1">
        <name>Mg(2+)</name>
        <dbReference type="ChEBI" id="CHEBI:18420"/>
    </cofactor>
    <cofactor evidence="1">
        <name>Co(2+)</name>
        <dbReference type="ChEBI" id="CHEBI:48828"/>
    </cofactor>
    <text evidence="1">Binds 1 divalent metal cation per subunit. Can use ions such as Zn(2+), Mg(2+) or Co(2+).</text>
</comment>
<comment type="pathway">
    <text evidence="1">Cofactor biosynthesis; pyridoxine 5'-phosphate biosynthesis; pyridoxine 5'-phosphate from D-erythrose 4-phosphate: step 4/5.</text>
</comment>
<comment type="subunit">
    <text evidence="1">Homodimer.</text>
</comment>
<comment type="subcellular location">
    <subcellularLocation>
        <location evidence="1">Cytoplasm</location>
    </subcellularLocation>
</comment>
<comment type="miscellaneous">
    <text evidence="1">The active site is located at the dimer interface.</text>
</comment>
<comment type="similarity">
    <text evidence="1">Belongs to the PdxA family.</text>
</comment>